<evidence type="ECO:0000255" key="1">
    <source>
        <dbReference type="HAMAP-Rule" id="MF_00231"/>
    </source>
</evidence>
<comment type="function">
    <text evidence="1">eIF-2 functions in the early steps of protein synthesis by forming a ternary complex with GTP and initiator tRNA.</text>
</comment>
<comment type="subunit">
    <text evidence="1">Heterotrimer composed of an alpha, a beta and a gamma chain.</text>
</comment>
<comment type="similarity">
    <text evidence="1">Belongs to the eIF-2-alpha family.</text>
</comment>
<sequence>MPRKAKEYPEEGEFVVATVKNIHPYGAFLTLDEYPGKEGFMHISEVAPTWVKNIRDYLKEGQKIVAKVIRVDPEKGHIDLSLKRVNQQQRKAKLQEYKRAQKAENLLKMAAEKLGKDFETAWREVWVPLEEEYGEVYAAFEDAAQNGMDVLKGLISDEWIEALKPIIEAYVEIPTVTIDAEFEITVPKPNGIEIIKEALIKARDRANQEKDIEVKFSYQGAPRYRIDITAPDYYKAEEVLEDIAEEILRVIKEAGGEATLIRKEKRIKKVKKRGS</sequence>
<keyword id="KW-0396">Initiation factor</keyword>
<keyword id="KW-0648">Protein biosynthesis</keyword>
<keyword id="KW-1185">Reference proteome</keyword>
<keyword id="KW-0694">RNA-binding</keyword>
<protein>
    <recommendedName>
        <fullName evidence="1">Translation initiation factor 2 subunit alpha</fullName>
    </recommendedName>
    <alternativeName>
        <fullName evidence="1">aIF2-alpha</fullName>
    </alternativeName>
    <alternativeName>
        <fullName evidence="1">eIF-2-alpha</fullName>
    </alternativeName>
</protein>
<proteinExistence type="inferred from homology"/>
<name>IF2A_THEKO</name>
<organism>
    <name type="scientific">Thermococcus kodakarensis (strain ATCC BAA-918 / JCM 12380 / KOD1)</name>
    <name type="common">Pyrococcus kodakaraensis (strain KOD1)</name>
    <dbReference type="NCBI Taxonomy" id="69014"/>
    <lineage>
        <taxon>Archaea</taxon>
        <taxon>Methanobacteriati</taxon>
        <taxon>Methanobacteriota</taxon>
        <taxon>Thermococci</taxon>
        <taxon>Thermococcales</taxon>
        <taxon>Thermococcaceae</taxon>
        <taxon>Thermococcus</taxon>
    </lineage>
</organism>
<accession>Q5JE49</accession>
<feature type="chain" id="PRO_0000137401" description="Translation initiation factor 2 subunit alpha">
    <location>
        <begin position="1"/>
        <end position="275"/>
    </location>
</feature>
<feature type="domain" description="S1 motif" evidence="1">
    <location>
        <begin position="12"/>
        <end position="83"/>
    </location>
</feature>
<dbReference type="EMBL" id="AP006878">
    <property type="protein sequence ID" value="BAD85289.1"/>
    <property type="molecule type" value="Genomic_DNA"/>
</dbReference>
<dbReference type="RefSeq" id="WP_011250051.1">
    <property type="nucleotide sequence ID" value="NC_006624.1"/>
</dbReference>
<dbReference type="SMR" id="Q5JE49"/>
<dbReference type="FunCoup" id="Q5JE49">
    <property type="interactions" value="188"/>
</dbReference>
<dbReference type="STRING" id="69014.TK1100"/>
<dbReference type="EnsemblBacteria" id="BAD85289">
    <property type="protein sequence ID" value="BAD85289"/>
    <property type="gene ID" value="TK1100"/>
</dbReference>
<dbReference type="GeneID" id="78447613"/>
<dbReference type="KEGG" id="tko:TK1100"/>
<dbReference type="PATRIC" id="fig|69014.16.peg.1076"/>
<dbReference type="eggNOG" id="arCOG04107">
    <property type="taxonomic scope" value="Archaea"/>
</dbReference>
<dbReference type="HOGENOM" id="CLU_033458_0_2_2"/>
<dbReference type="InParanoid" id="Q5JE49"/>
<dbReference type="OrthoDB" id="84794at2157"/>
<dbReference type="PhylomeDB" id="Q5JE49"/>
<dbReference type="Proteomes" id="UP000000536">
    <property type="component" value="Chromosome"/>
</dbReference>
<dbReference type="GO" id="GO:0043022">
    <property type="term" value="F:ribosome binding"/>
    <property type="evidence" value="ECO:0000318"/>
    <property type="project" value="GO_Central"/>
</dbReference>
<dbReference type="GO" id="GO:0003723">
    <property type="term" value="F:RNA binding"/>
    <property type="evidence" value="ECO:0007669"/>
    <property type="project" value="UniProtKB-UniRule"/>
</dbReference>
<dbReference type="GO" id="GO:0003743">
    <property type="term" value="F:translation initiation factor activity"/>
    <property type="evidence" value="ECO:0000318"/>
    <property type="project" value="GO_Central"/>
</dbReference>
<dbReference type="GO" id="GO:0006413">
    <property type="term" value="P:translational initiation"/>
    <property type="evidence" value="ECO:0000318"/>
    <property type="project" value="GO_Central"/>
</dbReference>
<dbReference type="CDD" id="cd04452">
    <property type="entry name" value="S1_IF2_alpha"/>
    <property type="match status" value="1"/>
</dbReference>
<dbReference type="FunFam" id="2.40.50.140:FF:000015">
    <property type="entry name" value="Eukaryotic translation initiation factor 2 subunit alpha"/>
    <property type="match status" value="1"/>
</dbReference>
<dbReference type="FunFam" id="1.10.150.190:FF:000006">
    <property type="entry name" value="Translation initiation factor 2 subunit alpha"/>
    <property type="match status" value="1"/>
</dbReference>
<dbReference type="FunFam" id="3.30.70.1130:FF:000002">
    <property type="entry name" value="Translation initiation factor 2 subunit alpha"/>
    <property type="match status" value="1"/>
</dbReference>
<dbReference type="Gene3D" id="3.30.70.1130">
    <property type="entry name" value="EIF_2_alpha"/>
    <property type="match status" value="1"/>
</dbReference>
<dbReference type="Gene3D" id="2.40.50.140">
    <property type="entry name" value="Nucleic acid-binding proteins"/>
    <property type="match status" value="1"/>
</dbReference>
<dbReference type="Gene3D" id="1.10.150.190">
    <property type="entry name" value="Translation initiation factor 2, subunit 1, domain 2"/>
    <property type="match status" value="1"/>
</dbReference>
<dbReference type="HAMAP" id="MF_00231">
    <property type="entry name" value="eIF_2_alpha"/>
    <property type="match status" value="1"/>
</dbReference>
<dbReference type="InterPro" id="IPR012340">
    <property type="entry name" value="NA-bd_OB-fold"/>
</dbReference>
<dbReference type="InterPro" id="IPR003029">
    <property type="entry name" value="S1_domain"/>
</dbReference>
<dbReference type="InterPro" id="IPR044126">
    <property type="entry name" value="S1_IF2_alpha"/>
</dbReference>
<dbReference type="InterPro" id="IPR022964">
    <property type="entry name" value="TIF2_asu_arc"/>
</dbReference>
<dbReference type="InterPro" id="IPR024055">
    <property type="entry name" value="TIF2_asu_C"/>
</dbReference>
<dbReference type="InterPro" id="IPR024054">
    <property type="entry name" value="TIF2_asu_middle_sf"/>
</dbReference>
<dbReference type="InterPro" id="IPR011488">
    <property type="entry name" value="TIF_2_asu"/>
</dbReference>
<dbReference type="NCBIfam" id="NF003062">
    <property type="entry name" value="PRK03987.1-1"/>
    <property type="match status" value="1"/>
</dbReference>
<dbReference type="NCBIfam" id="NF003064">
    <property type="entry name" value="PRK03987.1-4"/>
    <property type="match status" value="1"/>
</dbReference>
<dbReference type="NCBIfam" id="NF003066">
    <property type="entry name" value="PRK03987.1-6"/>
    <property type="match status" value="1"/>
</dbReference>
<dbReference type="PANTHER" id="PTHR10602">
    <property type="entry name" value="EUKARYOTIC TRANSLATION INITIATION FACTOR 2 SUBUNIT 1"/>
    <property type="match status" value="1"/>
</dbReference>
<dbReference type="PANTHER" id="PTHR10602:SF0">
    <property type="entry name" value="EUKARYOTIC TRANSLATION INITIATION FACTOR 2 SUBUNIT 1"/>
    <property type="match status" value="1"/>
</dbReference>
<dbReference type="Pfam" id="PF07541">
    <property type="entry name" value="EIF_2_alpha"/>
    <property type="match status" value="1"/>
</dbReference>
<dbReference type="Pfam" id="PF00575">
    <property type="entry name" value="S1"/>
    <property type="match status" value="1"/>
</dbReference>
<dbReference type="SMART" id="SM00316">
    <property type="entry name" value="S1"/>
    <property type="match status" value="1"/>
</dbReference>
<dbReference type="SUPFAM" id="SSF110993">
    <property type="entry name" value="eIF-2-alpha, C-terminal domain"/>
    <property type="match status" value="1"/>
</dbReference>
<dbReference type="SUPFAM" id="SSF116742">
    <property type="entry name" value="eIF2alpha middle domain-like"/>
    <property type="match status" value="1"/>
</dbReference>
<dbReference type="SUPFAM" id="SSF50249">
    <property type="entry name" value="Nucleic acid-binding proteins"/>
    <property type="match status" value="1"/>
</dbReference>
<dbReference type="PROSITE" id="PS50126">
    <property type="entry name" value="S1"/>
    <property type="match status" value="1"/>
</dbReference>
<reference key="1">
    <citation type="journal article" date="2005" name="Genome Res.">
        <title>Complete genome sequence of the hyperthermophilic archaeon Thermococcus kodakaraensis KOD1 and comparison with Pyrococcus genomes.</title>
        <authorList>
            <person name="Fukui T."/>
            <person name="Atomi H."/>
            <person name="Kanai T."/>
            <person name="Matsumi R."/>
            <person name="Fujiwara S."/>
            <person name="Imanaka T."/>
        </authorList>
    </citation>
    <scope>NUCLEOTIDE SEQUENCE [LARGE SCALE GENOMIC DNA]</scope>
    <source>
        <strain>ATCC BAA-918 / JCM 12380 / KOD1</strain>
    </source>
</reference>
<gene>
    <name evidence="1" type="primary">eif2a</name>
    <name type="ordered locus">TK1100</name>
</gene>